<evidence type="ECO:0000255" key="1"/>
<evidence type="ECO:0000255" key="2">
    <source>
        <dbReference type="PROSITE-ProRule" id="PRU00114"/>
    </source>
</evidence>
<evidence type="ECO:0000305" key="3"/>
<sequence>EHVSVFVIFAQTHEPSGECMFEFDEDEVFHVDLDKKQAIWYLPEFGRMFSVEAQGGLANIAAAKSNLNACIQHSNHTQAPNEPPEVIVFPKEPVELGQPNTLICHIDKFFPPVLNVTWLRNGQPVTEGVSETVFLASTEFRFRKFHYLAFVPSAADVYDCRVEHWGLDAPLLTHWEAQEPIQMPETTETVVCALGLVVGLAGVVVGIVLITKALRSSPDPRARRPL</sequence>
<protein>
    <recommendedName>
        <fullName>RLA class II histocompatibility antigen, DP alpha-1 chain</fullName>
    </recommendedName>
    <alternativeName>
        <fullName>D10 haplotype</fullName>
    </alternativeName>
</protein>
<organism>
    <name type="scientific">Oryctolagus cuniculus</name>
    <name type="common">Rabbit</name>
    <dbReference type="NCBI Taxonomy" id="9986"/>
    <lineage>
        <taxon>Eukaryota</taxon>
        <taxon>Metazoa</taxon>
        <taxon>Chordata</taxon>
        <taxon>Craniata</taxon>
        <taxon>Vertebrata</taxon>
        <taxon>Euteleostomi</taxon>
        <taxon>Mammalia</taxon>
        <taxon>Eutheria</taxon>
        <taxon>Euarchontoglires</taxon>
        <taxon>Glires</taxon>
        <taxon>Lagomorpha</taxon>
        <taxon>Leporidae</taxon>
        <taxon>Oryctolagus</taxon>
    </lineage>
</organism>
<name>HA2P_RABIT</name>
<dbReference type="EMBL" id="M22640">
    <property type="protein sequence ID" value="AAA31396.1"/>
    <property type="molecule type" value="Genomic_DNA"/>
</dbReference>
<dbReference type="PIR" id="B32283">
    <property type="entry name" value="B32283"/>
</dbReference>
<dbReference type="SMR" id="P20755"/>
<dbReference type="PaxDb" id="9986-ENSOCUP00000002876"/>
<dbReference type="eggNOG" id="ENOG502RXYJ">
    <property type="taxonomic scope" value="Eukaryota"/>
</dbReference>
<dbReference type="InParanoid" id="P20755"/>
<dbReference type="Proteomes" id="UP000001811">
    <property type="component" value="Unplaced"/>
</dbReference>
<dbReference type="GO" id="GO:0042613">
    <property type="term" value="C:MHC class II protein complex"/>
    <property type="evidence" value="ECO:0007669"/>
    <property type="project" value="UniProtKB-KW"/>
</dbReference>
<dbReference type="GO" id="GO:0002250">
    <property type="term" value="P:adaptive immune response"/>
    <property type="evidence" value="ECO:0007669"/>
    <property type="project" value="UniProtKB-KW"/>
</dbReference>
<dbReference type="GO" id="GO:0002504">
    <property type="term" value="P:antigen processing and presentation of peptide or polysaccharide antigen via MHC class II"/>
    <property type="evidence" value="ECO:0007669"/>
    <property type="project" value="UniProtKB-KW"/>
</dbReference>
<dbReference type="GO" id="GO:0002682">
    <property type="term" value="P:regulation of immune system process"/>
    <property type="evidence" value="ECO:0007669"/>
    <property type="project" value="UniProtKB-ARBA"/>
</dbReference>
<dbReference type="CDD" id="cd05767">
    <property type="entry name" value="IgC1_MHC_II_alpha"/>
    <property type="match status" value="1"/>
</dbReference>
<dbReference type="FunFam" id="2.60.40.10:FF:000280">
    <property type="entry name" value="HLA class II histocompatibility antigen, DR alpha chain"/>
    <property type="match status" value="1"/>
</dbReference>
<dbReference type="Gene3D" id="3.10.320.10">
    <property type="entry name" value="Class II Histocompatibility Antigen, M Beta Chain, Chain B, domain 1"/>
    <property type="match status" value="1"/>
</dbReference>
<dbReference type="Gene3D" id="2.60.40.10">
    <property type="entry name" value="Immunoglobulins"/>
    <property type="match status" value="1"/>
</dbReference>
<dbReference type="InterPro" id="IPR007110">
    <property type="entry name" value="Ig-like_dom"/>
</dbReference>
<dbReference type="InterPro" id="IPR036179">
    <property type="entry name" value="Ig-like_dom_sf"/>
</dbReference>
<dbReference type="InterPro" id="IPR013783">
    <property type="entry name" value="Ig-like_fold"/>
</dbReference>
<dbReference type="InterPro" id="IPR003006">
    <property type="entry name" value="Ig/MHC_CS"/>
</dbReference>
<dbReference type="InterPro" id="IPR003597">
    <property type="entry name" value="Ig_C1-set"/>
</dbReference>
<dbReference type="InterPro" id="IPR050160">
    <property type="entry name" value="MHC/Immunoglobulin"/>
</dbReference>
<dbReference type="InterPro" id="IPR011162">
    <property type="entry name" value="MHC_I/II-like_Ag-recog"/>
</dbReference>
<dbReference type="InterPro" id="IPR014745">
    <property type="entry name" value="MHC_II_a/b_N"/>
</dbReference>
<dbReference type="InterPro" id="IPR001003">
    <property type="entry name" value="MHC_II_a_N"/>
</dbReference>
<dbReference type="PANTHER" id="PTHR19944:SF64">
    <property type="entry name" value="HLA CLASS II HISTOCOMPATIBILITY ANTIGEN, DP ALPHA 1 CHAIN"/>
    <property type="match status" value="1"/>
</dbReference>
<dbReference type="PANTHER" id="PTHR19944">
    <property type="entry name" value="MHC CLASS II-RELATED"/>
    <property type="match status" value="1"/>
</dbReference>
<dbReference type="Pfam" id="PF07654">
    <property type="entry name" value="C1-set"/>
    <property type="match status" value="1"/>
</dbReference>
<dbReference type="Pfam" id="PF00993">
    <property type="entry name" value="MHC_II_alpha"/>
    <property type="match status" value="1"/>
</dbReference>
<dbReference type="SMART" id="SM00407">
    <property type="entry name" value="IGc1"/>
    <property type="match status" value="1"/>
</dbReference>
<dbReference type="SMART" id="SM00920">
    <property type="entry name" value="MHC_II_alpha"/>
    <property type="match status" value="1"/>
</dbReference>
<dbReference type="SUPFAM" id="SSF48726">
    <property type="entry name" value="Immunoglobulin"/>
    <property type="match status" value="1"/>
</dbReference>
<dbReference type="SUPFAM" id="SSF54452">
    <property type="entry name" value="MHC antigen-recognition domain"/>
    <property type="match status" value="1"/>
</dbReference>
<dbReference type="PROSITE" id="PS50835">
    <property type="entry name" value="IG_LIKE"/>
    <property type="match status" value="1"/>
</dbReference>
<dbReference type="PROSITE" id="PS00290">
    <property type="entry name" value="IG_MHC"/>
    <property type="match status" value="1"/>
</dbReference>
<keyword id="KW-1064">Adaptive immunity</keyword>
<keyword id="KW-1015">Disulfide bond</keyword>
<keyword id="KW-0325">Glycoprotein</keyword>
<keyword id="KW-0391">Immunity</keyword>
<keyword id="KW-0472">Membrane</keyword>
<keyword id="KW-0491">MHC II</keyword>
<keyword id="KW-1185">Reference proteome</keyword>
<keyword id="KW-0812">Transmembrane</keyword>
<keyword id="KW-1133">Transmembrane helix</keyword>
<accession>P20755</accession>
<reference key="1">
    <citation type="journal article" date="1988" name="J. Immunol.">
        <title>Rabbit MHC. II. Sequence analysis of the R-DP alpha- and beta-genes.</title>
        <authorList>
            <person name="Sittisombut N."/>
            <person name="Mordacq J."/>
            <person name="Knight K.L."/>
        </authorList>
    </citation>
    <scope>NUCLEOTIDE SEQUENCE [GENOMIC DNA]</scope>
</reference>
<feature type="chain" id="PRO_0000080751" description="RLA class II histocompatibility antigen, DP alpha-1 chain">
    <location>
        <begin position="1" status="less than"/>
        <end position="226"/>
    </location>
</feature>
<feature type="topological domain" description="Extracellular" evidence="1">
    <location>
        <begin position="1" status="less than"/>
        <end position="189"/>
    </location>
</feature>
<feature type="transmembrane region" description="Helical" evidence="1">
    <location>
        <begin position="190"/>
        <end position="210"/>
    </location>
</feature>
<feature type="topological domain" description="Cytoplasmic" evidence="1">
    <location>
        <begin position="211"/>
        <end position="226"/>
    </location>
</feature>
<feature type="domain" description="Ig-like C1-type">
    <location>
        <begin position="84"/>
        <end position="176"/>
    </location>
</feature>
<feature type="glycosylation site" description="N-linked (GlcNAc...) asparagine" evidence="1">
    <location>
        <position position="75"/>
    </location>
</feature>
<feature type="glycosylation site" description="N-linked (GlcNAc...) asparagine" evidence="1">
    <location>
        <position position="115"/>
    </location>
</feature>
<feature type="disulfide bond" evidence="2">
    <location>
        <begin position="104"/>
        <end position="160"/>
    </location>
</feature>
<feature type="non-terminal residue">
    <location>
        <position position="1"/>
    </location>
</feature>
<comment type="subcellular location">
    <subcellularLocation>
        <location evidence="3">Membrane</location>
        <topology evidence="3">Single-pass type I membrane protein</topology>
    </subcellularLocation>
</comment>
<comment type="similarity">
    <text evidence="3">Belongs to the MHC class II family.</text>
</comment>
<proteinExistence type="inferred from homology"/>